<reference key="1">
    <citation type="journal article" date="1999" name="Cytogenet. Cell Genet.">
        <title>cDNA cloning and chromosome mapping of the mouse casein kinase I epsilon gene (Csnk1e).</title>
        <authorList>
            <person name="Kusuda J."/>
            <person name="Hirai M."/>
            <person name="Tanuma R."/>
            <person name="Hashimoto K."/>
        </authorList>
    </citation>
    <scope>NUCLEOTIDE SEQUENCE [MRNA]</scope>
</reference>
<reference key="2">
    <citation type="journal article" date="2004" name="Genome Res.">
        <title>The status, quality, and expansion of the NIH full-length cDNA project: the Mammalian Gene Collection (MGC).</title>
        <authorList>
            <consortium name="The MGC Project Team"/>
        </authorList>
    </citation>
    <scope>NUCLEOTIDE SEQUENCE [LARGE SCALE MRNA]</scope>
</reference>
<reference key="3">
    <citation type="journal article" date="2000" name="Mol. Cell. Biol.">
        <title>Nuclear entry of the circadian regulator mPER1 is controlled by mammalian casein kinase I epsilon.</title>
        <authorList>
            <person name="Vielhaber E."/>
            <person name="Eide E."/>
            <person name="Rivers A."/>
            <person name="Gao Z.-H."/>
            <person name="Virshup D.M."/>
        </authorList>
    </citation>
    <scope>FUNCTION AS PER1 KINASE</scope>
    <scope>MUTAGENESIS OF LYS-38</scope>
</reference>
<reference key="4">
    <citation type="journal article" date="2001" name="Cell">
        <title>Posttranslational mechanisms regulate the mammalian circadian clock.</title>
        <authorList>
            <person name="Lee C."/>
            <person name="Etchegaray J.-P."/>
            <person name="Cagampang F.R.A."/>
            <person name="Loudon A.S.I."/>
            <person name="Reppert S.M."/>
        </authorList>
    </citation>
    <scope>IDENTIFICATION IN A COMPLEX WITH CLOCK; PER1; PER2; CRY1; CRY2; CSNK1D AND CSNK1E</scope>
</reference>
<reference key="5">
    <citation type="journal article" date="2002" name="Genes Dev.">
        <title>The ankyrin repeat protein diversin recruits casein kinase Iepsilon to the beta-catenin degradation complex and acts in both canonical Wnt and Wnt/JNK signaling.</title>
        <authorList>
            <person name="Schwarz-Romond T."/>
            <person name="Asbrand C."/>
            <person name="Bakkers J."/>
            <person name="Kuehl M."/>
            <person name="Schaeffer H.J."/>
            <person name="Huelsken J."/>
            <person name="Behrens J."/>
            <person name="Hammerschmidt M."/>
            <person name="Birchmeier W."/>
        </authorList>
    </citation>
    <scope>INTERACTION WITH ANKRD6</scope>
</reference>
<reference key="6">
    <citation type="journal article" date="2004" name="Mol. Cell. Biol.">
        <title>Direct association between mouse PERIOD and CKIepsilon is critical for a functioning circadian clock.</title>
        <authorList>
            <person name="Lee C."/>
            <person name="Weaver D.R."/>
            <person name="Reppert S.M."/>
        </authorList>
    </citation>
    <scope>FUNCTION AS PER PROTEINS KINASE</scope>
</reference>
<reference key="7">
    <citation type="journal article" date="2006" name="Mol. Cell. Proteomics">
        <title>Comprehensive identification of phosphorylation sites in postsynaptic density preparations.</title>
        <authorList>
            <person name="Trinidad J.C."/>
            <person name="Specht C.G."/>
            <person name="Thalhammer A."/>
            <person name="Schoepfer R."/>
            <person name="Burlingame A.L."/>
        </authorList>
    </citation>
    <scope>IDENTIFICATION BY MASS SPECTROMETRY [LARGE SCALE ANALYSIS]</scope>
    <source>
        <tissue>Brain</tissue>
    </source>
</reference>
<reference key="8">
    <citation type="journal article" date="2006" name="Proc. Natl. Acad. Sci. U.S.A.">
        <title>Posttranslational regulation of the mammalian circadian clock by cryptochrome and protein phosphatase 5.</title>
        <authorList>
            <person name="Partch C.L."/>
            <person name="Shields K.F."/>
            <person name="Thompson C.L."/>
            <person name="Selby C.P."/>
            <person name="Sancar A."/>
        </authorList>
    </citation>
    <scope>TISSUE SPECIFICITY</scope>
    <scope>INDUCTION</scope>
</reference>
<reference key="9">
    <citation type="journal article" date="2008" name="Neuron">
        <title>Setting clock speed in mammals: the CK1 epsilon tau mutation in mice accelerates circadian pacemakers by selectively destabilizing PERIOD proteins.</title>
        <authorList>
            <person name="Meng Q.J."/>
            <person name="Logunova L."/>
            <person name="Maywood E.S."/>
            <person name="Gallego M."/>
            <person name="Lebiecki J."/>
            <person name="Brown T.M."/>
            <person name="Sladek M."/>
            <person name="Semikhodskii A.S."/>
            <person name="Glossop N.R."/>
            <person name="Piggins H.D."/>
            <person name="Chesham J.E."/>
            <person name="Bechtold D.A."/>
            <person name="Yoo S.H."/>
            <person name="Takahashi J.S."/>
            <person name="Virshup D.M."/>
            <person name="Boot-Handford R.P."/>
            <person name="Hastings M.H."/>
            <person name="Loudon A.S."/>
        </authorList>
    </citation>
    <scope>DISRUPTION PHENOTYPE</scope>
    <scope>FUNCTION</scope>
    <scope>MUTAGENESIS OF ARG-178</scope>
</reference>
<reference key="10">
    <citation type="journal article" date="2009" name="Mol. Cell. Biol.">
        <title>Casein kinase 1 delta regulates the pace of the mammalian circadian clock.</title>
        <authorList>
            <person name="Etchegaray J.P."/>
            <person name="Machida K.K."/>
            <person name="Noton E."/>
            <person name="Constance C.M."/>
            <person name="Dallmann R."/>
            <person name="Di Napoli M.N."/>
            <person name="DeBruyne J.P."/>
            <person name="Lambert C.M."/>
            <person name="Yu E.A."/>
            <person name="Reppert S.M."/>
            <person name="Weaver D.R."/>
        </authorList>
    </citation>
    <scope>FUNCTION IN CIRCADIAN CLOCK</scope>
    <scope>DISRUPTION PHENOTYPE</scope>
    <scope>CATALYTIC ACTIVITY</scope>
    <scope>SUBCELLULAR LOCATION</scope>
</reference>
<reference key="11">
    <citation type="journal article" date="2011" name="Proc. Natl. Acad. Sci. U.S.A.">
        <title>The period of the circadian oscillator is primarily determined by the balance between casein kinase 1 and protein phosphatase 1.</title>
        <authorList>
            <person name="Lee H.M."/>
            <person name="Chen R."/>
            <person name="Kim H."/>
            <person name="Etchegaray J.P."/>
            <person name="Weaver D.R."/>
            <person name="Lee C."/>
        </authorList>
    </citation>
    <scope>FUNCTION IN CIRCADIAN CLOCK</scope>
    <scope>DEPHOSPHORYLATION</scope>
</reference>
<reference key="12">
    <citation type="journal article" date="2014" name="Mol. Cell. Proteomics">
        <title>Immunoaffinity enrichment and mass spectrometry analysis of protein methylation.</title>
        <authorList>
            <person name="Guo A."/>
            <person name="Gu H."/>
            <person name="Zhou J."/>
            <person name="Mulhern D."/>
            <person name="Wang Y."/>
            <person name="Lee K.A."/>
            <person name="Yang V."/>
            <person name="Aguiar M."/>
            <person name="Kornhauser J."/>
            <person name="Jia X."/>
            <person name="Ren J."/>
            <person name="Beausoleil S.A."/>
            <person name="Silva J.C."/>
            <person name="Vemulapalli V."/>
            <person name="Bedford M.T."/>
            <person name="Comb M.J."/>
        </authorList>
    </citation>
    <scope>METHYLATION [LARGE SCALE ANALYSIS] AT ARG-382</scope>
    <scope>IDENTIFICATION BY MASS SPECTROMETRY [LARGE SCALE ANALYSIS]</scope>
    <source>
        <tissue>Brain</tissue>
        <tissue>Embryo</tissue>
    </source>
</reference>
<reference key="13">
    <citation type="journal article" date="2018" name="J. Biol. Chem.">
        <title>Phosphorylation of human enhancer filamentation 1 (HEF1) stimulates interaction with Polo-like kinase 1 leading to HEF1 localization to focal adhesions.</title>
        <authorList>
            <person name="Lee K.H."/>
            <person name="Hwang J.A."/>
            <person name="Kim S.O."/>
            <person name="Kim J.H."/>
            <person name="Shin S.C."/>
            <person name="Kim E.E."/>
            <person name="Lee K.S."/>
            <person name="Rhee K."/>
            <person name="Jeon B.H."/>
            <person name="Bang J.K."/>
            <person name="Cha-Molstad H."/>
            <person name="Soung N.K."/>
            <person name="Jang J.H."/>
            <person name="Ko S.K."/>
            <person name="Lee H.G."/>
            <person name="Ahn J.S."/>
            <person name="Kwon Y.T."/>
            <person name="Kim B.Y."/>
        </authorList>
    </citation>
    <scope>FUNCTION</scope>
</reference>
<dbReference type="EC" id="2.7.11.1" evidence="12"/>
<dbReference type="EMBL" id="AB028736">
    <property type="protein sequence ID" value="BAA88107.2"/>
    <property type="molecule type" value="mRNA"/>
</dbReference>
<dbReference type="EMBL" id="BC026127">
    <property type="protein sequence ID" value="AAH26127.1"/>
    <property type="molecule type" value="mRNA"/>
</dbReference>
<dbReference type="CCDS" id="CCDS27640.1"/>
<dbReference type="PIR" id="S47616">
    <property type="entry name" value="S47616"/>
</dbReference>
<dbReference type="RefSeq" id="NP_001276827.1">
    <property type="nucleotide sequence ID" value="NM_001289898.3"/>
</dbReference>
<dbReference type="RefSeq" id="NP_001346791.1">
    <property type="nucleotide sequence ID" value="NM_001359862.2"/>
</dbReference>
<dbReference type="RefSeq" id="NP_001346792.1">
    <property type="nucleotide sequence ID" value="NM_001359863.2"/>
</dbReference>
<dbReference type="RefSeq" id="NP_001398805.1">
    <property type="nucleotide sequence ID" value="NM_001411876.1"/>
</dbReference>
<dbReference type="RefSeq" id="NP_001398806.1">
    <property type="nucleotide sequence ID" value="NM_001411877.1"/>
</dbReference>
<dbReference type="RefSeq" id="NP_001398807.1">
    <property type="nucleotide sequence ID" value="NM_001411878.1"/>
</dbReference>
<dbReference type="RefSeq" id="NP_001398808.1">
    <property type="nucleotide sequence ID" value="NM_001411879.1"/>
</dbReference>
<dbReference type="RefSeq" id="NP_001398809.1">
    <property type="nucleotide sequence ID" value="NM_001411880.1"/>
</dbReference>
<dbReference type="RefSeq" id="NP_038795.3">
    <property type="nucleotide sequence ID" value="NM_013767.6"/>
</dbReference>
<dbReference type="RefSeq" id="XP_017172146.1">
    <property type="nucleotide sequence ID" value="XM_017316657.2"/>
</dbReference>
<dbReference type="RefSeq" id="XP_017172147.1">
    <property type="nucleotide sequence ID" value="XM_017316658.1"/>
</dbReference>
<dbReference type="RefSeq" id="XP_017172148.1">
    <property type="nucleotide sequence ID" value="XM_017316659.1"/>
</dbReference>
<dbReference type="RefSeq" id="XP_030104457.1">
    <property type="nucleotide sequence ID" value="XM_030248597.2"/>
</dbReference>
<dbReference type="RefSeq" id="XP_036015342.1">
    <property type="nucleotide sequence ID" value="XM_036159449.1"/>
</dbReference>
<dbReference type="RefSeq" id="XP_036015343.1">
    <property type="nucleotide sequence ID" value="XM_036159450.1"/>
</dbReference>
<dbReference type="RefSeq" id="XP_036015344.1">
    <property type="nucleotide sequence ID" value="XM_036159451.1"/>
</dbReference>
<dbReference type="RefSeq" id="XP_036015345.1">
    <property type="nucleotide sequence ID" value="XM_036159452.1"/>
</dbReference>
<dbReference type="SMR" id="Q9JMK2"/>
<dbReference type="BioGRID" id="205180">
    <property type="interactions" value="56"/>
</dbReference>
<dbReference type="CORUM" id="Q9JMK2"/>
<dbReference type="DIP" id="DIP-32410N"/>
<dbReference type="FunCoup" id="Q9JMK2">
    <property type="interactions" value="3065"/>
</dbReference>
<dbReference type="IntAct" id="Q9JMK2">
    <property type="interactions" value="57"/>
</dbReference>
<dbReference type="MINT" id="Q9JMK2"/>
<dbReference type="STRING" id="10090.ENSMUSP00000113341"/>
<dbReference type="GlyGen" id="Q9JMK2">
    <property type="glycosylation" value="1 site"/>
</dbReference>
<dbReference type="iPTMnet" id="Q9JMK2"/>
<dbReference type="PhosphoSitePlus" id="Q9JMK2"/>
<dbReference type="jPOST" id="Q9JMK2"/>
<dbReference type="PaxDb" id="10090-ENSMUSP00000113975"/>
<dbReference type="PeptideAtlas" id="Q9JMK2"/>
<dbReference type="ProteomicsDB" id="269448"/>
<dbReference type="Pumba" id="Q9JMK2"/>
<dbReference type="DNASU" id="27373"/>
<dbReference type="Ensembl" id="ENSMUST00000117786.9">
    <property type="protein sequence ID" value="ENSMUSP00000113341.2"/>
    <property type="gene ID" value="ENSMUSG00000022433.22"/>
</dbReference>
<dbReference type="Ensembl" id="ENSMUST00000120859.9">
    <property type="protein sequence ID" value="ENSMUSP00000113975.2"/>
    <property type="gene ID" value="ENSMUSG00000022433.22"/>
</dbReference>
<dbReference type="GeneID" id="27373"/>
<dbReference type="KEGG" id="mmu:27373"/>
<dbReference type="UCSC" id="uc007wtl.2">
    <property type="organism name" value="mouse"/>
</dbReference>
<dbReference type="AGR" id="MGI:1351660"/>
<dbReference type="CTD" id="1454"/>
<dbReference type="MGI" id="MGI:1351660">
    <property type="gene designation" value="Csnk1e"/>
</dbReference>
<dbReference type="VEuPathDB" id="HostDB:ENSMUSG00000022433"/>
<dbReference type="eggNOG" id="KOG1164">
    <property type="taxonomic scope" value="Eukaryota"/>
</dbReference>
<dbReference type="GeneTree" id="ENSGT00940000153536"/>
<dbReference type="HOGENOM" id="CLU_019279_2_2_1"/>
<dbReference type="InParanoid" id="Q9JMK2"/>
<dbReference type="OrthoDB" id="5800476at2759"/>
<dbReference type="PhylomeDB" id="Q9JMK2"/>
<dbReference type="TreeFam" id="TF300544"/>
<dbReference type="BRENDA" id="2.7.11.1">
    <property type="organism ID" value="3474"/>
</dbReference>
<dbReference type="Reactome" id="R-MMU-201688">
    <property type="pathway name" value="WNT mediated activation of DVL"/>
</dbReference>
<dbReference type="Reactome" id="R-MMU-2565942">
    <property type="pathway name" value="Regulation of PLK1 Activity at G2/M Transition"/>
</dbReference>
<dbReference type="Reactome" id="R-MMU-380259">
    <property type="pathway name" value="Loss of Nlp from mitotic centrosomes"/>
</dbReference>
<dbReference type="Reactome" id="R-MMU-380270">
    <property type="pathway name" value="Recruitment of mitotic centrosome proteins and complexes"/>
</dbReference>
<dbReference type="Reactome" id="R-MMU-380284">
    <property type="pathway name" value="Loss of proteins required for interphase microtubule organization from the centrosome"/>
</dbReference>
<dbReference type="Reactome" id="R-MMU-380320">
    <property type="pathway name" value="Recruitment of NuMA to mitotic centrosomes"/>
</dbReference>
<dbReference type="Reactome" id="R-MMU-5620912">
    <property type="pathway name" value="Anchoring of the basal body to the plasma membrane"/>
</dbReference>
<dbReference type="Reactome" id="R-MMU-6791226">
    <property type="pathway name" value="Major pathway of rRNA processing in the nucleolus and cytosol"/>
</dbReference>
<dbReference type="Reactome" id="R-MMU-8854518">
    <property type="pathway name" value="AURKA Activation by TPX2"/>
</dbReference>
<dbReference type="BioGRID-ORCS" id="27373">
    <property type="hits" value="3 hits in 79 CRISPR screens"/>
</dbReference>
<dbReference type="CD-CODE" id="CE726F99">
    <property type="entry name" value="Postsynaptic density"/>
</dbReference>
<dbReference type="ChiTaRS" id="Csnk1e">
    <property type="organism name" value="mouse"/>
</dbReference>
<dbReference type="PRO" id="PR:Q9JMK2"/>
<dbReference type="Proteomes" id="UP000000589">
    <property type="component" value="Chromosome 15"/>
</dbReference>
<dbReference type="RNAct" id="Q9JMK2">
    <property type="molecule type" value="protein"/>
</dbReference>
<dbReference type="Bgee" id="ENSMUSG00000022433">
    <property type="expression patterns" value="Expressed in embryonic brain and 278 other cell types or tissues"/>
</dbReference>
<dbReference type="ExpressionAtlas" id="Q9JMK2">
    <property type="expression patterns" value="baseline and differential"/>
</dbReference>
<dbReference type="GO" id="GO:0005829">
    <property type="term" value="C:cytosol"/>
    <property type="evidence" value="ECO:0000304"/>
    <property type="project" value="Reactome"/>
</dbReference>
<dbReference type="GO" id="GO:0030426">
    <property type="term" value="C:growth cone"/>
    <property type="evidence" value="ECO:0007669"/>
    <property type="project" value="Ensembl"/>
</dbReference>
<dbReference type="GO" id="GO:0043025">
    <property type="term" value="C:neuronal cell body"/>
    <property type="evidence" value="ECO:0007669"/>
    <property type="project" value="Ensembl"/>
</dbReference>
<dbReference type="GO" id="GO:0005654">
    <property type="term" value="C:nucleoplasm"/>
    <property type="evidence" value="ECO:0000304"/>
    <property type="project" value="Reactome"/>
</dbReference>
<dbReference type="GO" id="GO:0005634">
    <property type="term" value="C:nucleus"/>
    <property type="evidence" value="ECO:0000314"/>
    <property type="project" value="UniProtKB"/>
</dbReference>
<dbReference type="GO" id="GO:1990904">
    <property type="term" value="C:ribonucleoprotein complex"/>
    <property type="evidence" value="ECO:0000314"/>
    <property type="project" value="MGI"/>
</dbReference>
<dbReference type="GO" id="GO:0005524">
    <property type="term" value="F:ATP binding"/>
    <property type="evidence" value="ECO:0007669"/>
    <property type="project" value="UniProtKB-KW"/>
</dbReference>
<dbReference type="GO" id="GO:0004672">
    <property type="term" value="F:protein kinase activity"/>
    <property type="evidence" value="ECO:0000314"/>
    <property type="project" value="UniProtKB"/>
</dbReference>
<dbReference type="GO" id="GO:0106310">
    <property type="term" value="F:protein serine kinase activity"/>
    <property type="evidence" value="ECO:0007669"/>
    <property type="project" value="RHEA"/>
</dbReference>
<dbReference type="GO" id="GO:0004674">
    <property type="term" value="F:protein serine/threonine kinase activity"/>
    <property type="evidence" value="ECO:0000304"/>
    <property type="project" value="Reactome"/>
</dbReference>
<dbReference type="GO" id="GO:0060070">
    <property type="term" value="P:canonical Wnt signaling pathway"/>
    <property type="evidence" value="ECO:0007669"/>
    <property type="project" value="Ensembl"/>
</dbReference>
<dbReference type="GO" id="GO:1990090">
    <property type="term" value="P:cellular response to nerve growth factor stimulus"/>
    <property type="evidence" value="ECO:0007669"/>
    <property type="project" value="Ensembl"/>
</dbReference>
<dbReference type="GO" id="GO:0048512">
    <property type="term" value="P:circadian behavior"/>
    <property type="evidence" value="ECO:0007669"/>
    <property type="project" value="Ensembl"/>
</dbReference>
<dbReference type="GO" id="GO:0032922">
    <property type="term" value="P:circadian regulation of gene expression"/>
    <property type="evidence" value="ECO:0000315"/>
    <property type="project" value="UniProtKB"/>
</dbReference>
<dbReference type="GO" id="GO:0007623">
    <property type="term" value="P:circadian rhythm"/>
    <property type="evidence" value="ECO:0000304"/>
    <property type="project" value="MGI"/>
</dbReference>
<dbReference type="GO" id="GO:0030178">
    <property type="term" value="P:negative regulation of Wnt signaling pathway"/>
    <property type="evidence" value="ECO:0000316"/>
    <property type="project" value="MGI"/>
</dbReference>
<dbReference type="GO" id="GO:1902004">
    <property type="term" value="P:positive regulation of amyloid-beta formation"/>
    <property type="evidence" value="ECO:0007669"/>
    <property type="project" value="Ensembl"/>
</dbReference>
<dbReference type="GO" id="GO:0090263">
    <property type="term" value="P:positive regulation of canonical Wnt signaling pathway"/>
    <property type="evidence" value="ECO:0000316"/>
    <property type="project" value="MGI"/>
</dbReference>
<dbReference type="GO" id="GO:2000052">
    <property type="term" value="P:positive regulation of non-canonical Wnt signaling pathway"/>
    <property type="evidence" value="ECO:0000316"/>
    <property type="project" value="ParkinsonsUK-UCL"/>
</dbReference>
<dbReference type="GO" id="GO:0032436">
    <property type="term" value="P:positive regulation of proteasomal ubiquitin-dependent protein catabolic process"/>
    <property type="evidence" value="ECO:0000315"/>
    <property type="project" value="UniProtKB"/>
</dbReference>
<dbReference type="GO" id="GO:0030177">
    <property type="term" value="P:positive regulation of Wnt signaling pathway"/>
    <property type="evidence" value="ECO:0000316"/>
    <property type="project" value="ParkinsonsUK-UCL"/>
</dbReference>
<dbReference type="GO" id="GO:0008104">
    <property type="term" value="P:protein localization"/>
    <property type="evidence" value="ECO:0000314"/>
    <property type="project" value="MGI"/>
</dbReference>
<dbReference type="GO" id="GO:0006468">
    <property type="term" value="P:protein phosphorylation"/>
    <property type="evidence" value="ECO:0000314"/>
    <property type="project" value="UniProtKB"/>
</dbReference>
<dbReference type="GO" id="GO:0042752">
    <property type="term" value="P:regulation of circadian rhythm"/>
    <property type="evidence" value="ECO:0000315"/>
    <property type="project" value="UniProtKB"/>
</dbReference>
<dbReference type="GO" id="GO:0032880">
    <property type="term" value="P:regulation of protein localization"/>
    <property type="evidence" value="ECO:0000315"/>
    <property type="project" value="ParkinsonsUK-UCL"/>
</dbReference>
<dbReference type="CDD" id="cd14125">
    <property type="entry name" value="STKc_CK1_delta_epsilon"/>
    <property type="match status" value="1"/>
</dbReference>
<dbReference type="FunFam" id="1.10.510.10:FF:000194">
    <property type="entry name" value="Casein kinase I isoform delta"/>
    <property type="match status" value="1"/>
</dbReference>
<dbReference type="FunFam" id="3.30.200.20:FF:000538">
    <property type="entry name" value="Putative Casein kinase I"/>
    <property type="match status" value="1"/>
</dbReference>
<dbReference type="Gene3D" id="1.10.510.10">
    <property type="entry name" value="Transferase(Phosphotransferase) domain 1"/>
    <property type="match status" value="1"/>
</dbReference>
<dbReference type="InterPro" id="IPR050235">
    <property type="entry name" value="CK1_Ser-Thr_kinase"/>
</dbReference>
<dbReference type="InterPro" id="IPR011009">
    <property type="entry name" value="Kinase-like_dom_sf"/>
</dbReference>
<dbReference type="InterPro" id="IPR000719">
    <property type="entry name" value="Prot_kinase_dom"/>
</dbReference>
<dbReference type="InterPro" id="IPR017441">
    <property type="entry name" value="Protein_kinase_ATP_BS"/>
</dbReference>
<dbReference type="InterPro" id="IPR008271">
    <property type="entry name" value="Ser/Thr_kinase_AS"/>
</dbReference>
<dbReference type="PANTHER" id="PTHR11909">
    <property type="entry name" value="CASEIN KINASE-RELATED"/>
    <property type="match status" value="1"/>
</dbReference>
<dbReference type="Pfam" id="PF00069">
    <property type="entry name" value="Pkinase"/>
    <property type="match status" value="1"/>
</dbReference>
<dbReference type="SMART" id="SM00220">
    <property type="entry name" value="S_TKc"/>
    <property type="match status" value="1"/>
</dbReference>
<dbReference type="SUPFAM" id="SSF56112">
    <property type="entry name" value="Protein kinase-like (PK-like)"/>
    <property type="match status" value="1"/>
</dbReference>
<dbReference type="PROSITE" id="PS00107">
    <property type="entry name" value="PROTEIN_KINASE_ATP"/>
    <property type="match status" value="1"/>
</dbReference>
<dbReference type="PROSITE" id="PS50011">
    <property type="entry name" value="PROTEIN_KINASE_DOM"/>
    <property type="match status" value="1"/>
</dbReference>
<dbReference type="PROSITE" id="PS00108">
    <property type="entry name" value="PROTEIN_KINASE_ST"/>
    <property type="match status" value="1"/>
</dbReference>
<accession>Q9JMK2</accession>
<accession>Q8R389</accession>
<gene>
    <name type="primary">Csnk1e</name>
</gene>
<name>KC1E_MOUSE</name>
<feature type="chain" id="PRO_0000192838" description="Casein kinase I isoform epsilon">
    <location>
        <begin position="1"/>
        <end position="416"/>
    </location>
</feature>
<feature type="domain" description="Protein kinase" evidence="3">
    <location>
        <begin position="9"/>
        <end position="277"/>
    </location>
</feature>
<feature type="region of interest" description="Disordered" evidence="5">
    <location>
        <begin position="301"/>
        <end position="416"/>
    </location>
</feature>
<feature type="compositionally biased region" description="Basic and acidic residues" evidence="5">
    <location>
        <begin position="301"/>
        <end position="318"/>
    </location>
</feature>
<feature type="compositionally biased region" description="Polar residues" evidence="5">
    <location>
        <begin position="351"/>
        <end position="365"/>
    </location>
</feature>
<feature type="active site" description="Proton acceptor" evidence="3 4">
    <location>
        <position position="128"/>
    </location>
</feature>
<feature type="binding site" evidence="3">
    <location>
        <begin position="15"/>
        <end position="23"/>
    </location>
    <ligand>
        <name>ATP</name>
        <dbReference type="ChEBI" id="CHEBI:30616"/>
    </ligand>
</feature>
<feature type="binding site" evidence="3">
    <location>
        <position position="38"/>
    </location>
    <ligand>
        <name>ATP</name>
        <dbReference type="ChEBI" id="CHEBI:30616"/>
    </ligand>
</feature>
<feature type="modified residue" description="Phosphoserine" evidence="2">
    <location>
        <position position="343"/>
    </location>
</feature>
<feature type="modified residue" description="Phosphoserine" evidence="2">
    <location>
        <position position="354"/>
    </location>
</feature>
<feature type="modified residue" description="Phosphothreonine" evidence="2">
    <location>
        <position position="362"/>
    </location>
</feature>
<feature type="modified residue" description="Phosphoserine" evidence="2">
    <location>
        <position position="363"/>
    </location>
</feature>
<feature type="modified residue" description="Omega-N-methylarginine" evidence="16">
    <location>
        <position position="382"/>
    </location>
</feature>
<feature type="modified residue" description="Phosphoserine" evidence="2">
    <location>
        <position position="389"/>
    </location>
</feature>
<feature type="modified residue" description="Phosphoserine" evidence="2">
    <location>
        <position position="405"/>
    </location>
</feature>
<feature type="modified residue" description="Phosphoserine" evidence="2">
    <location>
        <position position="408"/>
    </location>
</feature>
<feature type="mutagenesis site" description="Decreases PER1 phosphorylation." evidence="6">
    <original>K</original>
    <variation>A</variation>
    <location>
        <position position="38"/>
    </location>
</feature>
<feature type="mutagenesis site" description="Increases PER1 nuclear import." evidence="6">
    <original>K</original>
    <variation>R</variation>
    <location>
        <position position="38"/>
    </location>
</feature>
<feature type="mutagenesis site" description="Shortens circadian rhythm. Accelerates PER2 degradation." evidence="11">
    <original>R</original>
    <variation>C</variation>
    <location>
        <position position="178"/>
    </location>
</feature>
<feature type="sequence conflict" description="In Ref. 1; BAA88107." evidence="15" ref="1">
    <original>N</original>
    <variation>D</variation>
    <location>
        <position position="28"/>
    </location>
</feature>
<feature type="sequence conflict" description="In Ref. 1; BAA88107." evidence="15" ref="1">
    <original>E</original>
    <variation>G</variation>
    <location>
        <position position="310"/>
    </location>
</feature>
<feature type="sequence conflict" description="In Ref. 1; BAA88107." evidence="15" ref="1">
    <original>R</original>
    <variation>G</variation>
    <location>
        <position position="379"/>
    </location>
</feature>
<keyword id="KW-0067">ATP-binding</keyword>
<keyword id="KW-0090">Biological rhythms</keyword>
<keyword id="KW-0963">Cytoplasm</keyword>
<keyword id="KW-0418">Kinase</keyword>
<keyword id="KW-0488">Methylation</keyword>
<keyword id="KW-0547">Nucleotide-binding</keyword>
<keyword id="KW-0539">Nucleus</keyword>
<keyword id="KW-0597">Phosphoprotein</keyword>
<keyword id="KW-1185">Reference proteome</keyword>
<keyword id="KW-0723">Serine/threonine-protein kinase</keyword>
<keyword id="KW-0808">Transferase</keyword>
<keyword id="KW-0879">Wnt signaling pathway</keyword>
<proteinExistence type="evidence at protein level"/>
<comment type="function">
    <text evidence="2 6 9 11 12 13 14">Casein kinases are operationally defined by their preferential utilization of acidic proteins such as caseins as substrates (By similarity). Participates in Wnt signaling (By similarity). Phosphorylates DVL1 (By similarity). Phosphorylates DVL2 (By similarity). Phosphorylates NEDD9/HEF1 (PubMed:29191835). Central component of the circadian clock (PubMed:18400165, PubMed:19414593, PubMed:21930935). In balance with PP1, determines the circadian period length, through the regulation of the speed and rhythmicity of PER1 and PER2 phosphorylation (PubMed:18400165, PubMed:19414593, PubMed:21930935). Controls PER1 and PER2 nuclear transport and degradation (PubMed:10848614, PubMed:14701732, PubMed:18400165, PubMed:19414593, PubMed:21930935). Inhibits cytokine-induced granuloytic differentiation (By similarity).</text>
</comment>
<comment type="catalytic activity">
    <reaction evidence="12">
        <text>L-seryl-[protein] + ATP = O-phospho-L-seryl-[protein] + ADP + H(+)</text>
        <dbReference type="Rhea" id="RHEA:17989"/>
        <dbReference type="Rhea" id="RHEA-COMP:9863"/>
        <dbReference type="Rhea" id="RHEA-COMP:11604"/>
        <dbReference type="ChEBI" id="CHEBI:15378"/>
        <dbReference type="ChEBI" id="CHEBI:29999"/>
        <dbReference type="ChEBI" id="CHEBI:30616"/>
        <dbReference type="ChEBI" id="CHEBI:83421"/>
        <dbReference type="ChEBI" id="CHEBI:456216"/>
        <dbReference type="EC" id="2.7.11.1"/>
    </reaction>
    <physiologicalReaction direction="left-to-right" evidence="12">
        <dbReference type="Rhea" id="RHEA:17990"/>
    </physiologicalReaction>
</comment>
<comment type="catalytic activity">
    <reaction evidence="12">
        <text>L-threonyl-[protein] + ATP = O-phospho-L-threonyl-[protein] + ADP + H(+)</text>
        <dbReference type="Rhea" id="RHEA:46608"/>
        <dbReference type="Rhea" id="RHEA-COMP:11060"/>
        <dbReference type="Rhea" id="RHEA-COMP:11605"/>
        <dbReference type="ChEBI" id="CHEBI:15378"/>
        <dbReference type="ChEBI" id="CHEBI:30013"/>
        <dbReference type="ChEBI" id="CHEBI:30616"/>
        <dbReference type="ChEBI" id="CHEBI:61977"/>
        <dbReference type="ChEBI" id="CHEBI:456216"/>
        <dbReference type="EC" id="2.7.11.1"/>
    </reaction>
    <physiologicalReaction direction="left-to-right" evidence="12">
        <dbReference type="Rhea" id="RHEA:46609"/>
    </physiologicalReaction>
</comment>
<comment type="activity regulation">
    <text evidence="1">Phosphorylation leads to a decrease in the catalytic activity.</text>
</comment>
<comment type="subunit">
    <text evidence="2 7 8">Monomer (By similarity). Component of the circadian core oscillator, which includes the CRY proteins, CLOCK, or NPAS2, ARTNL/BMAL1 or ARTNL2/BMAL2, CSNK1D and/or CSNK1E, TIMELESS and the PER proteins (PubMed:11779462). Interacts with ANKRD6 (PubMed:12183362). Interacts with PER1 (By similarity). Interacts with DBNDD2, LRP5, LRP6 and SOCS3 (By similarity). Interacts with SNAI1 (via zinc fingers) (By similarity). Interacts with DDX3X; this interaction greatly enhances CSNK1E affinity for ATP and DVL2 phosphorylation, but inhibits DDX3X ATPase/helicase activity. In the presence of RNA, the interaction is decreased (By similarity). Interacts with FAM83A, FAM83B, FAM83E and FAM83H (via DUF1669) (By similarity).</text>
</comment>
<comment type="interaction">
    <interactant intactId="EBI-771709">
        <id>Q9JMK2</id>
    </interactant>
    <interactant intactId="EBI-79859">
        <id>O08785</id>
        <label>Clock</label>
    </interactant>
    <organismsDiffer>false</organismsDiffer>
    <experiments>2</experiments>
</comment>
<comment type="interaction">
    <interactant intactId="EBI-771709">
        <id>Q9JMK2</id>
    </interactant>
    <interactant intactId="EBI-1266764">
        <id>O35973</id>
        <label>Per1</label>
    </interactant>
    <organismsDiffer>false</organismsDiffer>
    <experiments>2</experiments>
</comment>
<comment type="interaction">
    <interactant intactId="EBI-771709">
        <id>Q9JMK2</id>
    </interactant>
    <interactant intactId="EBI-1266779">
        <id>O54943</id>
        <label>Per2</label>
    </interactant>
    <organismsDiffer>false</organismsDiffer>
    <experiments>4</experiments>
</comment>
<comment type="subcellular location">
    <subcellularLocation>
        <location evidence="1">Cytoplasm</location>
    </subcellularLocation>
    <subcellularLocation>
        <location evidence="12">Nucleus</location>
    </subcellularLocation>
</comment>
<comment type="tissue specificity">
    <text evidence="10">Expressed in all tissues examined, including brain, heart, lung, liver, pancreas, kidney, placenta and skeletal muscle. Expressed in monocytes and lymphocytes but not in granulocytes.</text>
</comment>
<comment type="induction">
    <text evidence="10">Down-regulated during granulocytic differentiation. Does not show circadian oscillations.</text>
</comment>
<comment type="PTM">
    <text>Autophosphorylated. Partially dephosphorylated by PPP5C. May be dephosphorylated by PP1.</text>
</comment>
<comment type="disruption phenotype">
    <text evidence="11 12">No visible phenotype. Has no apparent effect on circadian oscillation of protein levels. Mice exhibit a small but significant increase in circadian period length.</text>
</comment>
<comment type="similarity">
    <text evidence="15">Belongs to the protein kinase superfamily. CK1 Ser/Thr protein kinase family. Casein kinase I subfamily.</text>
</comment>
<evidence type="ECO:0000250" key="1"/>
<evidence type="ECO:0000250" key="2">
    <source>
        <dbReference type="UniProtKB" id="P49674"/>
    </source>
</evidence>
<evidence type="ECO:0000255" key="3">
    <source>
        <dbReference type="PROSITE-ProRule" id="PRU00159"/>
    </source>
</evidence>
<evidence type="ECO:0000255" key="4">
    <source>
        <dbReference type="PROSITE-ProRule" id="PRU10027"/>
    </source>
</evidence>
<evidence type="ECO:0000256" key="5">
    <source>
        <dbReference type="SAM" id="MobiDB-lite"/>
    </source>
</evidence>
<evidence type="ECO:0000269" key="6">
    <source>
    </source>
</evidence>
<evidence type="ECO:0000269" key="7">
    <source>
    </source>
</evidence>
<evidence type="ECO:0000269" key="8">
    <source>
    </source>
</evidence>
<evidence type="ECO:0000269" key="9">
    <source>
    </source>
</evidence>
<evidence type="ECO:0000269" key="10">
    <source>
    </source>
</evidence>
<evidence type="ECO:0000269" key="11">
    <source>
    </source>
</evidence>
<evidence type="ECO:0000269" key="12">
    <source>
    </source>
</evidence>
<evidence type="ECO:0000269" key="13">
    <source>
    </source>
</evidence>
<evidence type="ECO:0000269" key="14">
    <source>
    </source>
</evidence>
<evidence type="ECO:0000305" key="15"/>
<evidence type="ECO:0007744" key="16">
    <source>
    </source>
</evidence>
<protein>
    <recommendedName>
        <fullName>Casein kinase I isoform epsilon</fullName>
        <shortName>CKI-epsilon</shortName>
        <shortName>CKIe</shortName>
        <ecNumber evidence="12">2.7.11.1</ecNumber>
    </recommendedName>
</protein>
<sequence>MELRVGNKYRLGRKIGSGSFGDIYLGANIASGEEVAIKLECVKTKHPQLHIESKFYKMMQGGVGIPSIKWCGAEGDYNVMVMELLGPSLEDLFNFCSRKFSLKTVLLLADQMISRIEYIHSKNFIHRDVKPDNFLMGLGKKGNLVYIIDFGLAKKYRDARTHQHIPYRENKNLTGTARYASINTHLGIEQSRRDDLESLGYVLMYFNLGSLPWQGLKAATKRQKYERISEKKMSTPIEVLCKGYPSEFSTYLNFCRSLRFDDKPDYSYLRQLFRNLFHRQGFSYDYVFDWNMLKFGAARNPEDVDRERREHEREERMGQLRGSATRALPPGPPTGATANRLRSAAEPVASTPASRIQQTGNTSPRAISRADRERKVSMRLHRGAPANVSSSDLTGRQEVSRLAASQTSVPFDHLGK</sequence>
<organism>
    <name type="scientific">Mus musculus</name>
    <name type="common">Mouse</name>
    <dbReference type="NCBI Taxonomy" id="10090"/>
    <lineage>
        <taxon>Eukaryota</taxon>
        <taxon>Metazoa</taxon>
        <taxon>Chordata</taxon>
        <taxon>Craniata</taxon>
        <taxon>Vertebrata</taxon>
        <taxon>Euteleostomi</taxon>
        <taxon>Mammalia</taxon>
        <taxon>Eutheria</taxon>
        <taxon>Euarchontoglires</taxon>
        <taxon>Glires</taxon>
        <taxon>Rodentia</taxon>
        <taxon>Myomorpha</taxon>
        <taxon>Muroidea</taxon>
        <taxon>Muridae</taxon>
        <taxon>Murinae</taxon>
        <taxon>Mus</taxon>
        <taxon>Mus</taxon>
    </lineage>
</organism>